<comment type="function">
    <text evidence="1">Involved in the gluconeogenesis. Catalyzes the conversion of oxaloacetate (OAA) to phosphoenolpyruvate (PEP) through direct phosphoryl transfer between the nucleoside triphosphate and OAA.</text>
</comment>
<comment type="catalytic activity">
    <reaction evidence="1">
        <text>oxaloacetate + ATP = phosphoenolpyruvate + ADP + CO2</text>
        <dbReference type="Rhea" id="RHEA:18617"/>
        <dbReference type="ChEBI" id="CHEBI:16452"/>
        <dbReference type="ChEBI" id="CHEBI:16526"/>
        <dbReference type="ChEBI" id="CHEBI:30616"/>
        <dbReference type="ChEBI" id="CHEBI:58702"/>
        <dbReference type="ChEBI" id="CHEBI:456216"/>
        <dbReference type="EC" id="4.1.1.49"/>
    </reaction>
</comment>
<comment type="cofactor">
    <cofactor evidence="1">
        <name>Mn(2+)</name>
        <dbReference type="ChEBI" id="CHEBI:29035"/>
    </cofactor>
    <text evidence="1">Binds 1 Mn(2+) ion per subunit.</text>
</comment>
<comment type="pathway">
    <text evidence="1">Carbohydrate biosynthesis; gluconeogenesis.</text>
</comment>
<comment type="subcellular location">
    <subcellularLocation>
        <location evidence="1">Cytoplasm</location>
    </subcellularLocation>
</comment>
<comment type="similarity">
    <text evidence="1">Belongs to the phosphoenolpyruvate carboxykinase (ATP) family.</text>
</comment>
<comment type="sequence caution" evidence="2">
    <conflict type="erroneous initiation">
        <sequence resource="EMBL-CDS" id="AAF10554"/>
    </conflict>
    <text>Extended N-terminus.</text>
</comment>
<organism>
    <name type="scientific">Deinococcus radiodurans (strain ATCC 13939 / DSM 20539 / JCM 16871 / CCUG 27074 / LMG 4051 / NBRC 15346 / NCIMB 9279 / VKM B-1422 / R1)</name>
    <dbReference type="NCBI Taxonomy" id="243230"/>
    <lineage>
        <taxon>Bacteria</taxon>
        <taxon>Thermotogati</taxon>
        <taxon>Deinococcota</taxon>
        <taxon>Deinococci</taxon>
        <taxon>Deinococcales</taxon>
        <taxon>Deinococcaceae</taxon>
        <taxon>Deinococcus</taxon>
    </lineage>
</organism>
<keyword id="KW-0067">ATP-binding</keyword>
<keyword id="KW-0963">Cytoplasm</keyword>
<keyword id="KW-0210">Decarboxylase</keyword>
<keyword id="KW-0312">Gluconeogenesis</keyword>
<keyword id="KW-0456">Lyase</keyword>
<keyword id="KW-0464">Manganese</keyword>
<keyword id="KW-0479">Metal-binding</keyword>
<keyword id="KW-0547">Nucleotide-binding</keyword>
<keyword id="KW-1185">Reference proteome</keyword>
<name>PCKA_DEIRA</name>
<sequence length="466" mass="50952">MTTAQPDAQPGAQPIADLGLKPGQLHLNPGVDDLYAHAIRLGEGVQAATGPLTVRTNKTGRSPKDRFIVEDDQTRETVWWEGFNQPISAEVFDRLLDKMVKYAEGRELFVQQVFAGTDAEHRIPVRMITEMAYHSLFIRNMFVRPTAEELQNFQAEWTVLNIPSFKADPAVDGTRTDTFILVNFSKKMIIAGGTQYAGENKKGIFGVLNYLLPAKGIMPMHCSANVGEDGDVALFFGLSGTGKTTLSADPGRKLIGDDEHGWTDTGVFNFEGGCYAKVINLSAEAEPAIYQTTRNYGTVLENVVLDESGTPDLDDGSLTENTRSAYPIEQIANIQPGSVGGIPKNVVFLTADAFGVLPPLSRLTPEQMMYQFISGFTAKIPGTEEGVTDPTPTFSTCFGAPFMPRHPGEYARLLAQKVEESGAKVWLVNTGWTGGKYGEGHRMSLNLTRLKSRDSHFADHCPPKQV</sequence>
<gene>
    <name evidence="1" type="primary">pckA</name>
    <name type="ordered locus">DR_0977</name>
</gene>
<accession>Q9RVP6</accession>
<feature type="chain" id="PRO_0000203817" description="Phosphoenolpyruvate carboxykinase (ATP)">
    <location>
        <begin position="1"/>
        <end position="466"/>
    </location>
</feature>
<feature type="binding site" evidence="1">
    <location>
        <position position="61"/>
    </location>
    <ligand>
        <name>substrate</name>
    </ligand>
</feature>
<feature type="binding site" evidence="1">
    <location>
        <position position="196"/>
    </location>
    <ligand>
        <name>substrate</name>
    </ligand>
</feature>
<feature type="binding site" evidence="1">
    <location>
        <position position="202"/>
    </location>
    <ligand>
        <name>ATP</name>
        <dbReference type="ChEBI" id="CHEBI:30616"/>
    </ligand>
</feature>
<feature type="binding site" evidence="1">
    <location>
        <position position="202"/>
    </location>
    <ligand>
        <name>Mn(2+)</name>
        <dbReference type="ChEBI" id="CHEBI:29035"/>
    </ligand>
</feature>
<feature type="binding site" evidence="1">
    <location>
        <position position="202"/>
    </location>
    <ligand>
        <name>substrate</name>
    </ligand>
</feature>
<feature type="binding site" evidence="1">
    <location>
        <position position="221"/>
    </location>
    <ligand>
        <name>ATP</name>
        <dbReference type="ChEBI" id="CHEBI:30616"/>
    </ligand>
</feature>
<feature type="binding site" evidence="1">
    <location>
        <position position="221"/>
    </location>
    <ligand>
        <name>Mn(2+)</name>
        <dbReference type="ChEBI" id="CHEBI:29035"/>
    </ligand>
</feature>
<feature type="binding site" evidence="1">
    <location>
        <begin position="237"/>
        <end position="245"/>
    </location>
    <ligand>
        <name>ATP</name>
        <dbReference type="ChEBI" id="CHEBI:30616"/>
    </ligand>
</feature>
<feature type="binding site" evidence="1">
    <location>
        <position position="258"/>
    </location>
    <ligand>
        <name>Mn(2+)</name>
        <dbReference type="ChEBI" id="CHEBI:29035"/>
    </ligand>
</feature>
<feature type="binding site" evidence="1">
    <location>
        <position position="286"/>
    </location>
    <ligand>
        <name>ATP</name>
        <dbReference type="ChEBI" id="CHEBI:30616"/>
    </ligand>
</feature>
<feature type="binding site" evidence="1">
    <location>
        <position position="323"/>
    </location>
    <ligand>
        <name>ATP</name>
        <dbReference type="ChEBI" id="CHEBI:30616"/>
    </ligand>
</feature>
<feature type="binding site" evidence="1">
    <location>
        <position position="323"/>
    </location>
    <ligand>
        <name>substrate</name>
    </ligand>
</feature>
<feature type="binding site" evidence="1">
    <location>
        <position position="448"/>
    </location>
    <ligand>
        <name>ATP</name>
        <dbReference type="ChEBI" id="CHEBI:30616"/>
    </ligand>
</feature>
<reference key="1">
    <citation type="journal article" date="1999" name="Science">
        <title>Genome sequence of the radioresistant bacterium Deinococcus radiodurans R1.</title>
        <authorList>
            <person name="White O."/>
            <person name="Eisen J.A."/>
            <person name="Heidelberg J.F."/>
            <person name="Hickey E.K."/>
            <person name="Peterson J.D."/>
            <person name="Dodson R.J."/>
            <person name="Haft D.H."/>
            <person name="Gwinn M.L."/>
            <person name="Nelson W.C."/>
            <person name="Richardson D.L."/>
            <person name="Moffat K.S."/>
            <person name="Qin H."/>
            <person name="Jiang L."/>
            <person name="Pamphile W."/>
            <person name="Crosby M."/>
            <person name="Shen M."/>
            <person name="Vamathevan J.J."/>
            <person name="Lam P."/>
            <person name="McDonald L.A."/>
            <person name="Utterback T.R."/>
            <person name="Zalewski C."/>
            <person name="Makarova K.S."/>
            <person name="Aravind L."/>
            <person name="Daly M.J."/>
            <person name="Minton K.W."/>
            <person name="Fleischmann R.D."/>
            <person name="Ketchum K.A."/>
            <person name="Nelson K.E."/>
            <person name="Salzberg S.L."/>
            <person name="Smith H.O."/>
            <person name="Venter J.C."/>
            <person name="Fraser C.M."/>
        </authorList>
    </citation>
    <scope>NUCLEOTIDE SEQUENCE [LARGE SCALE GENOMIC DNA]</scope>
    <source>
        <strain>ATCC 13939 / DSM 20539 / JCM 16871 / CCUG 27074 / LMG 4051 / NBRC 15346 / NCIMB 9279 / VKM B-1422 / R1</strain>
    </source>
</reference>
<evidence type="ECO:0000255" key="1">
    <source>
        <dbReference type="HAMAP-Rule" id="MF_00453"/>
    </source>
</evidence>
<evidence type="ECO:0000305" key="2"/>
<proteinExistence type="inferred from homology"/>
<protein>
    <recommendedName>
        <fullName evidence="1">Phosphoenolpyruvate carboxykinase (ATP)</fullName>
        <shortName evidence="1">PCK</shortName>
        <shortName evidence="1">PEP carboxykinase</shortName>
        <shortName evidence="1">PEPCK</shortName>
        <ecNumber evidence="1">4.1.1.49</ecNumber>
    </recommendedName>
</protein>
<dbReference type="EC" id="4.1.1.49" evidence="1"/>
<dbReference type="EMBL" id="AE000513">
    <property type="protein sequence ID" value="AAF10554.1"/>
    <property type="status" value="ALT_INIT"/>
    <property type="molecule type" value="Genomic_DNA"/>
</dbReference>
<dbReference type="PIR" id="D75452">
    <property type="entry name" value="D75452"/>
</dbReference>
<dbReference type="RefSeq" id="NP_294701.1">
    <property type="nucleotide sequence ID" value="NC_001263.1"/>
</dbReference>
<dbReference type="RefSeq" id="WP_234944679.1">
    <property type="nucleotide sequence ID" value="NC_001263.1"/>
</dbReference>
<dbReference type="SMR" id="Q9RVP6"/>
<dbReference type="FunCoup" id="Q9RVP6">
    <property type="interactions" value="210"/>
</dbReference>
<dbReference type="STRING" id="243230.DR_0977"/>
<dbReference type="PaxDb" id="243230-DR_0977"/>
<dbReference type="EnsemblBacteria" id="AAF10554">
    <property type="protein sequence ID" value="AAF10554"/>
    <property type="gene ID" value="DR_0977"/>
</dbReference>
<dbReference type="KEGG" id="dra:DR_0977"/>
<dbReference type="PATRIC" id="fig|243230.17.peg.1164"/>
<dbReference type="eggNOG" id="COG1866">
    <property type="taxonomic scope" value="Bacteria"/>
</dbReference>
<dbReference type="HOGENOM" id="CLU_018247_0_1_0"/>
<dbReference type="InParanoid" id="Q9RVP6"/>
<dbReference type="OrthoDB" id="9806325at2"/>
<dbReference type="UniPathway" id="UPA00138"/>
<dbReference type="Proteomes" id="UP000002524">
    <property type="component" value="Chromosome 1"/>
</dbReference>
<dbReference type="GO" id="GO:0005829">
    <property type="term" value="C:cytosol"/>
    <property type="evidence" value="ECO:0000318"/>
    <property type="project" value="GO_Central"/>
</dbReference>
<dbReference type="GO" id="GO:0005524">
    <property type="term" value="F:ATP binding"/>
    <property type="evidence" value="ECO:0007669"/>
    <property type="project" value="UniProtKB-UniRule"/>
</dbReference>
<dbReference type="GO" id="GO:0046872">
    <property type="term" value="F:metal ion binding"/>
    <property type="evidence" value="ECO:0007669"/>
    <property type="project" value="UniProtKB-KW"/>
</dbReference>
<dbReference type="GO" id="GO:0004612">
    <property type="term" value="F:phosphoenolpyruvate carboxykinase (ATP) activity"/>
    <property type="evidence" value="ECO:0000318"/>
    <property type="project" value="GO_Central"/>
</dbReference>
<dbReference type="GO" id="GO:0006094">
    <property type="term" value="P:gluconeogenesis"/>
    <property type="evidence" value="ECO:0000318"/>
    <property type="project" value="GO_Central"/>
</dbReference>
<dbReference type="Gene3D" id="3.90.228.20">
    <property type="match status" value="1"/>
</dbReference>
<dbReference type="Gene3D" id="3.40.449.10">
    <property type="entry name" value="Phosphoenolpyruvate Carboxykinase, domain 1"/>
    <property type="match status" value="1"/>
</dbReference>
<dbReference type="Gene3D" id="2.170.8.10">
    <property type="entry name" value="Phosphoenolpyruvate Carboxykinase, domain 2"/>
    <property type="match status" value="1"/>
</dbReference>
<dbReference type="HAMAP" id="MF_00453">
    <property type="entry name" value="PEPCK_ATP"/>
    <property type="match status" value="1"/>
</dbReference>
<dbReference type="InterPro" id="IPR001272">
    <property type="entry name" value="PEP_carboxykinase_ATP"/>
</dbReference>
<dbReference type="InterPro" id="IPR013035">
    <property type="entry name" value="PEP_carboxykinase_C"/>
</dbReference>
<dbReference type="InterPro" id="IPR008210">
    <property type="entry name" value="PEP_carboxykinase_N"/>
</dbReference>
<dbReference type="InterPro" id="IPR015994">
    <property type="entry name" value="PEPCK_ATP_CS"/>
</dbReference>
<dbReference type="NCBIfam" id="TIGR00224">
    <property type="entry name" value="pckA"/>
    <property type="match status" value="1"/>
</dbReference>
<dbReference type="NCBIfam" id="NF006820">
    <property type="entry name" value="PRK09344.1-2"/>
    <property type="match status" value="1"/>
</dbReference>
<dbReference type="NCBIfam" id="NF006821">
    <property type="entry name" value="PRK09344.1-3"/>
    <property type="match status" value="1"/>
</dbReference>
<dbReference type="PANTHER" id="PTHR30031:SF0">
    <property type="entry name" value="PHOSPHOENOLPYRUVATE CARBOXYKINASE (ATP)"/>
    <property type="match status" value="1"/>
</dbReference>
<dbReference type="PANTHER" id="PTHR30031">
    <property type="entry name" value="PHOSPHOENOLPYRUVATE CARBOXYKINASE ATP"/>
    <property type="match status" value="1"/>
</dbReference>
<dbReference type="Pfam" id="PF01293">
    <property type="entry name" value="PEPCK_ATP"/>
    <property type="match status" value="1"/>
</dbReference>
<dbReference type="PIRSF" id="PIRSF006294">
    <property type="entry name" value="PEP_crbxkin"/>
    <property type="match status" value="1"/>
</dbReference>
<dbReference type="SUPFAM" id="SSF68923">
    <property type="entry name" value="PEP carboxykinase N-terminal domain"/>
    <property type="match status" value="1"/>
</dbReference>
<dbReference type="SUPFAM" id="SSF53795">
    <property type="entry name" value="PEP carboxykinase-like"/>
    <property type="match status" value="1"/>
</dbReference>
<dbReference type="PROSITE" id="PS00532">
    <property type="entry name" value="PEPCK_ATP"/>
    <property type="match status" value="1"/>
</dbReference>